<organism>
    <name type="scientific">Brucella abortus biovar 1 (strain 9-941)</name>
    <dbReference type="NCBI Taxonomy" id="262698"/>
    <lineage>
        <taxon>Bacteria</taxon>
        <taxon>Pseudomonadati</taxon>
        <taxon>Pseudomonadota</taxon>
        <taxon>Alphaproteobacteria</taxon>
        <taxon>Hyphomicrobiales</taxon>
        <taxon>Brucellaceae</taxon>
        <taxon>Brucella/Ochrobactrum group</taxon>
        <taxon>Brucella</taxon>
    </lineage>
</organism>
<evidence type="ECO:0000255" key="1">
    <source>
        <dbReference type="HAMAP-Rule" id="MF_00469"/>
    </source>
</evidence>
<keyword id="KW-0560">Oxidoreductase</keyword>
<keyword id="KW-0819">tRNA processing</keyword>
<reference key="1">
    <citation type="journal article" date="2005" name="J. Bacteriol.">
        <title>Completion of the genome sequence of Brucella abortus and comparison to the highly similar genomes of Brucella melitensis and Brucella suis.</title>
        <authorList>
            <person name="Halling S.M."/>
            <person name="Peterson-Burch B.D."/>
            <person name="Bricker B.J."/>
            <person name="Zuerner R.L."/>
            <person name="Qing Z."/>
            <person name="Li L.-L."/>
            <person name="Kapur V."/>
            <person name="Alt D.P."/>
            <person name="Olsen S.C."/>
        </authorList>
    </citation>
    <scope>NUCLEOTIDE SEQUENCE [LARGE SCALE GENOMIC DNA]</scope>
    <source>
        <strain>9-941</strain>
    </source>
</reference>
<gene>
    <name evidence="1" type="primary">trhO</name>
    <name type="ordered locus">BruAb2_0086</name>
</gene>
<accession>Q579Z7</accession>
<feature type="chain" id="PRO_0000161452" description="tRNA uridine(34) hydroxylase">
    <location>
        <begin position="1"/>
        <end position="305"/>
    </location>
</feature>
<feature type="domain" description="Rhodanese" evidence="1">
    <location>
        <begin position="125"/>
        <end position="219"/>
    </location>
</feature>
<feature type="active site" description="Cysteine persulfide intermediate" evidence="1">
    <location>
        <position position="179"/>
    </location>
</feature>
<dbReference type="EC" id="1.14.-.-" evidence="1"/>
<dbReference type="EMBL" id="AE017224">
    <property type="protein sequence ID" value="AAX75537.1"/>
    <property type="molecule type" value="Genomic_DNA"/>
</dbReference>
<dbReference type="RefSeq" id="WP_002966492.1">
    <property type="nucleotide sequence ID" value="NC_006933.1"/>
</dbReference>
<dbReference type="SMR" id="Q579Z7"/>
<dbReference type="EnsemblBacteria" id="AAX75537">
    <property type="protein sequence ID" value="AAX75537"/>
    <property type="gene ID" value="BruAb2_0086"/>
</dbReference>
<dbReference type="KEGG" id="bmb:BruAb2_0086"/>
<dbReference type="HOGENOM" id="CLU_038878_0_0_5"/>
<dbReference type="Proteomes" id="UP000000540">
    <property type="component" value="Chromosome II"/>
</dbReference>
<dbReference type="GO" id="GO:0016705">
    <property type="term" value="F:oxidoreductase activity, acting on paired donors, with incorporation or reduction of molecular oxygen"/>
    <property type="evidence" value="ECO:0007669"/>
    <property type="project" value="UniProtKB-UniRule"/>
</dbReference>
<dbReference type="GO" id="GO:0006400">
    <property type="term" value="P:tRNA modification"/>
    <property type="evidence" value="ECO:0007669"/>
    <property type="project" value="UniProtKB-UniRule"/>
</dbReference>
<dbReference type="CDD" id="cd01518">
    <property type="entry name" value="RHOD_YceA"/>
    <property type="match status" value="1"/>
</dbReference>
<dbReference type="Gene3D" id="3.30.70.100">
    <property type="match status" value="1"/>
</dbReference>
<dbReference type="Gene3D" id="3.40.250.10">
    <property type="entry name" value="Rhodanese-like domain"/>
    <property type="match status" value="1"/>
</dbReference>
<dbReference type="HAMAP" id="MF_00469">
    <property type="entry name" value="TrhO"/>
    <property type="match status" value="1"/>
</dbReference>
<dbReference type="InterPro" id="IPR001763">
    <property type="entry name" value="Rhodanese-like_dom"/>
</dbReference>
<dbReference type="InterPro" id="IPR036873">
    <property type="entry name" value="Rhodanese-like_dom_sf"/>
</dbReference>
<dbReference type="InterPro" id="IPR020936">
    <property type="entry name" value="TrhO"/>
</dbReference>
<dbReference type="InterPro" id="IPR040503">
    <property type="entry name" value="TRHO_N"/>
</dbReference>
<dbReference type="NCBIfam" id="NF001136">
    <property type="entry name" value="PRK00142.1-4"/>
    <property type="match status" value="1"/>
</dbReference>
<dbReference type="PANTHER" id="PTHR43268:SF3">
    <property type="entry name" value="RHODANESE-LIKE DOMAIN-CONTAINING PROTEIN 7-RELATED"/>
    <property type="match status" value="1"/>
</dbReference>
<dbReference type="PANTHER" id="PTHR43268">
    <property type="entry name" value="THIOSULFATE SULFURTRANSFERASE/RHODANESE-LIKE DOMAIN-CONTAINING PROTEIN 2"/>
    <property type="match status" value="1"/>
</dbReference>
<dbReference type="Pfam" id="PF00581">
    <property type="entry name" value="Rhodanese"/>
    <property type="match status" value="1"/>
</dbReference>
<dbReference type="Pfam" id="PF17773">
    <property type="entry name" value="UPF0176_N"/>
    <property type="match status" value="1"/>
</dbReference>
<dbReference type="SMART" id="SM00450">
    <property type="entry name" value="RHOD"/>
    <property type="match status" value="1"/>
</dbReference>
<dbReference type="SUPFAM" id="SSF52821">
    <property type="entry name" value="Rhodanese/Cell cycle control phosphatase"/>
    <property type="match status" value="1"/>
</dbReference>
<dbReference type="PROSITE" id="PS50206">
    <property type="entry name" value="RHODANESE_3"/>
    <property type="match status" value="1"/>
</dbReference>
<sequence>MSNLPFTVAALYCFAPLPQYESLREPLAQLCCANGIKGTLLLAAEGINGTVAGSAGAIEKLIAHITAIPGLGEPELKYSHASEMPFHRMKVRLKREIVTMGVEGIDPLKSVGTYIAPKDWNALIADENTVVVDKRNDYEYAIGTFEGAIDPQTRTFREFPEWVKQNRDRLEGKKIAMFCTGGIRCEKATAFVKGLGFDDVYHLKGGILKYLEEVPREQSMWNGECFVFDERVAVGHGLAESDVELCRACRRPLTPQDKLSQFFEEGVSCAGCYAERTPEDRARYAERQKQVKLAEKRGANKHIGS</sequence>
<comment type="function">
    <text evidence="1">Catalyzes oxygen-dependent 5-hydroxyuridine (ho5U) modification at position 34 in tRNAs.</text>
</comment>
<comment type="catalytic activity">
    <reaction evidence="1">
        <text>uridine(34) in tRNA + AH2 + O2 = 5-hydroxyuridine(34) in tRNA + A + H2O</text>
        <dbReference type="Rhea" id="RHEA:64224"/>
        <dbReference type="Rhea" id="RHEA-COMP:11727"/>
        <dbReference type="Rhea" id="RHEA-COMP:13381"/>
        <dbReference type="ChEBI" id="CHEBI:13193"/>
        <dbReference type="ChEBI" id="CHEBI:15377"/>
        <dbReference type="ChEBI" id="CHEBI:15379"/>
        <dbReference type="ChEBI" id="CHEBI:17499"/>
        <dbReference type="ChEBI" id="CHEBI:65315"/>
        <dbReference type="ChEBI" id="CHEBI:136877"/>
    </reaction>
</comment>
<comment type="similarity">
    <text evidence="1">Belongs to the TrhO family.</text>
</comment>
<proteinExistence type="inferred from homology"/>
<protein>
    <recommendedName>
        <fullName evidence="1">tRNA uridine(34) hydroxylase</fullName>
        <ecNumber evidence="1">1.14.-.-</ecNumber>
    </recommendedName>
    <alternativeName>
        <fullName evidence="1">tRNA hydroxylation protein O</fullName>
    </alternativeName>
</protein>
<name>TRHO_BRUAB</name>